<comment type="function">
    <text evidence="1">FMRFamides and FMRFamide-like peptides are neuropeptides.</text>
</comment>
<comment type="subcellular location">
    <subcellularLocation>
        <location evidence="6">Secreted</location>
    </subcellularLocation>
</comment>
<comment type="similarity">
    <text evidence="2">Belongs to the FARP (FMRF amide related peptide) family.</text>
</comment>
<evidence type="ECO:0000250" key="1">
    <source>
        <dbReference type="UniProtKB" id="P34405"/>
    </source>
</evidence>
<evidence type="ECO:0000255" key="2"/>
<evidence type="ECO:0000269" key="3">
    <source>
    </source>
</evidence>
<evidence type="ECO:0000303" key="4">
    <source>
    </source>
</evidence>
<evidence type="ECO:0000305" key="5"/>
<evidence type="ECO:0000305" key="6">
    <source>
    </source>
</evidence>
<proteinExistence type="evidence at protein level"/>
<keyword id="KW-0027">Amidation</keyword>
<keyword id="KW-0903">Direct protein sequencing</keyword>
<keyword id="KW-0527">Neuropeptide</keyword>
<keyword id="KW-0964">Secreted</keyword>
<dbReference type="GO" id="GO:0005576">
    <property type="term" value="C:extracellular region"/>
    <property type="evidence" value="ECO:0007669"/>
    <property type="project" value="UniProtKB-SubCell"/>
</dbReference>
<dbReference type="GO" id="GO:0007218">
    <property type="term" value="P:neuropeptide signaling pathway"/>
    <property type="evidence" value="ECO:0007669"/>
    <property type="project" value="UniProtKB-KW"/>
</dbReference>
<feature type="peptide" id="PRO_0000421528" description="Extended FMRFamide-7" evidence="3">
    <location>
        <begin position="1"/>
        <end position="9"/>
    </location>
</feature>
<feature type="modified residue" description="Leucine amide" evidence="3">
    <location>
        <position position="9"/>
    </location>
</feature>
<feature type="unsure residue" description="L or I" evidence="3">
    <location>
        <position position="9"/>
    </location>
</feature>
<organism>
    <name type="scientific">Tyrannophasma gladiator</name>
    <name type="common">Gladiator</name>
    <name type="synonym">Heel-walker</name>
    <dbReference type="NCBI Taxonomy" id="270861"/>
    <lineage>
        <taxon>Eukaryota</taxon>
        <taxon>Metazoa</taxon>
        <taxon>Ecdysozoa</taxon>
        <taxon>Arthropoda</taxon>
        <taxon>Hexapoda</taxon>
        <taxon>Insecta</taxon>
        <taxon>Pterygota</taxon>
        <taxon>Neoptera</taxon>
        <taxon>Polyneoptera</taxon>
        <taxon>Mantophasmatodea</taxon>
        <taxon>Mantophasmatodea incertae sedis</taxon>
        <taxon>Tyrannophasma</taxon>
    </lineage>
</organism>
<sequence>ARSDNFVRL</sequence>
<name>FAR7_TYRGL</name>
<reference evidence="5" key="1">
    <citation type="journal article" date="2012" name="Syst. Biol.">
        <title>Peptidomics-based phylogeny and biogeography of Mantophasmatodea (Hexapoda).</title>
        <authorList>
            <person name="Predel R."/>
            <person name="Neupert S."/>
            <person name="Huetteroth W."/>
            <person name="Kahnt J."/>
            <person name="Waidelich D."/>
            <person name="Roth S."/>
        </authorList>
    </citation>
    <scope>PROTEIN SEQUENCE</scope>
    <scope>AMIDATION AT LEU-9</scope>
    <source>
        <tissue evidence="3">Thoracic perisympathetic organs</tissue>
    </source>
</reference>
<accession>B3A0I1</accession>
<protein>
    <recommendedName>
        <fullName evidence="4">Extended FMRFamide-7</fullName>
        <shortName evidence="4">FMRFa-7</shortName>
    </recommendedName>
</protein>